<dbReference type="EC" id="2.4.-.-"/>
<dbReference type="EMBL" id="AJ567472">
    <property type="protein sequence ID" value="CAD98964.1"/>
    <property type="molecule type" value="Genomic_DNA"/>
</dbReference>
<dbReference type="RefSeq" id="YP_003760.1">
    <property type="nucleotide sequence ID" value="NC_005830.1"/>
</dbReference>
<dbReference type="SMR" id="Q70LB6"/>
<dbReference type="CAZy" id="GT4">
    <property type="family name" value="Glycosyltransferase Family 4"/>
</dbReference>
<dbReference type="KEGG" id="vg:2769162"/>
<dbReference type="Proteomes" id="UP000000514">
    <property type="component" value="Genome"/>
</dbReference>
<dbReference type="GO" id="GO:0016757">
    <property type="term" value="F:glycosyltransferase activity"/>
    <property type="evidence" value="ECO:0007669"/>
    <property type="project" value="UniProtKB-KW"/>
</dbReference>
<dbReference type="Gene3D" id="3.40.50.2000">
    <property type="entry name" value="Glycogen Phosphorylase B"/>
    <property type="match status" value="1"/>
</dbReference>
<dbReference type="SUPFAM" id="SSF53756">
    <property type="entry name" value="UDP-Glycosyltransferase/glycogen phosphorylase"/>
    <property type="match status" value="1"/>
</dbReference>
<name>GT300_AFV1Y</name>
<organismHost>
    <name type="scientific">Acidianus hospitalis</name>
    <dbReference type="NCBI Taxonomy" id="563177"/>
</organismHost>
<organismHost>
    <name type="scientific">Acidianus infernus</name>
    <dbReference type="NCBI Taxonomy" id="12915"/>
</organismHost>
<sequence length="300" mass="34584">MTQILVKNAFSWVNIAEDVCKFIPNCKLTVIDKEAIPSVEDTNVIYIGDLMNVKTISMLERIKAKNVVLWVDETRVPKTSYSLKNLKYNYWIVPVSQWNKEVYEEHIGHTEEIIPRCTEFRRTEGKRRGNVLFGVVSFTPGVYKRYEELLLAVDYYRKNYGELEIYAYGHTEGLPSFPGVHNMGRLGKSEIQKLYSIADFAIELGIEAFGMPSIEAWAMQVPMLYGNVNDVRNHAYGVSIDPVDFDAIDFGEYILPVPIYDEYKLAEKIREVAEIEEVPELPEKYRCSYTAKKLISYLEA</sequence>
<keyword id="KW-0328">Glycosyltransferase</keyword>
<keyword id="KW-1185">Reference proteome</keyword>
<keyword id="KW-0808">Transferase</keyword>
<organism>
    <name type="scientific">Acidianus filamentous virus 1 (isolate United States/Yellowstone)</name>
    <name type="common">AFV-1</name>
    <dbReference type="NCBI Taxonomy" id="654909"/>
    <lineage>
        <taxon>Viruses</taxon>
        <taxon>Adnaviria</taxon>
        <taxon>Zilligvirae</taxon>
        <taxon>Taleaviricota</taxon>
        <taxon>Tokiviricetes</taxon>
        <taxon>Ligamenvirales</taxon>
        <taxon>Ungulaviridae</taxon>
        <taxon>Captovirus</taxon>
        <taxon>Acidianus filamentous virus 1</taxon>
    </lineage>
</organism>
<feature type="chain" id="PRO_0000384534" description="Putative glycosyltransferase ORF300">
    <location>
        <begin position="1"/>
        <end position="300"/>
    </location>
</feature>
<reference key="1">
    <citation type="journal article" date="2003" name="Virology">
        <title>AFV1, a novel virus infecting hyperthermophilic archaea of the genus acidianus.</title>
        <authorList>
            <person name="Bettstetter M."/>
            <person name="Peng X."/>
            <person name="Garrett R.A."/>
            <person name="Prangishvili D."/>
        </authorList>
    </citation>
    <scope>NUCLEOTIDE SEQUENCE [GENOMIC DNA]</scope>
</reference>
<gene>
    <name type="ORF">ORF300</name>
</gene>
<protein>
    <recommendedName>
        <fullName>Putative glycosyltransferase ORF300</fullName>
        <ecNumber>2.4.-.-</ecNumber>
    </recommendedName>
</protein>
<evidence type="ECO:0000305" key="1"/>
<accession>Q70LB6</accession>
<proteinExistence type="inferred from homology"/>
<comment type="similarity">
    <text evidence="1">Belongs to the glycosyltransferase group 1 family. Glycosyltransferase 4 subfamily.</text>
</comment>